<feature type="signal peptide" evidence="1">
    <location>
        <begin position="1"/>
        <end position="20"/>
    </location>
</feature>
<feature type="chain" id="PRO_0000353833" description="Uncharacterized GPI-anchored protein C212.08c">
    <location>
        <begin position="21"/>
        <end position="96"/>
    </location>
</feature>
<feature type="propeptide" id="PRO_0000353834" description="Removed in mature form" evidence="1">
    <location>
        <begin position="97"/>
        <end position="278"/>
    </location>
</feature>
<feature type="lipid moiety-binding region" description="GPI-anchor amidated glycine" evidence="1">
    <location>
        <position position="96"/>
    </location>
</feature>
<organism>
    <name type="scientific">Schizosaccharomyces pombe (strain 972 / ATCC 24843)</name>
    <name type="common">Fission yeast</name>
    <dbReference type="NCBI Taxonomy" id="284812"/>
    <lineage>
        <taxon>Eukaryota</taxon>
        <taxon>Fungi</taxon>
        <taxon>Dikarya</taxon>
        <taxon>Ascomycota</taxon>
        <taxon>Taphrinomycotina</taxon>
        <taxon>Schizosaccharomycetes</taxon>
        <taxon>Schizosaccharomycetales</taxon>
        <taxon>Schizosaccharomycetaceae</taxon>
        <taxon>Schizosaccharomyces</taxon>
    </lineage>
</organism>
<gene>
    <name type="ORF">SPAC212.08c</name>
</gene>
<protein>
    <recommendedName>
        <fullName>Uncharacterized GPI-anchored protein C212.08c</fullName>
    </recommendedName>
</protein>
<proteinExistence type="inferred from homology"/>
<name>YM08_SCHPO</name>
<evidence type="ECO:0000255" key="1"/>
<evidence type="ECO:0000305" key="2"/>
<sequence length="278" mass="31039">MSPLIVGTLIIILLSGLATAFYVTWQGRLICAGVGLILEQAYEGGQMFNTLMAHCFETYNGVEKSGTQCVADWLKVGLLAVTFGAGGPRLVNTLGGTFLTSPTAKRSNLYCDDFTGADYFSCELETLRPYTLMRKSLPYGNIHDVWINTTDTHQMIGVHMTLNGTDMIHYYNKTYVINYSGLKLNSSAINKRSYFYPQDSFLVSHAEWQDGNGIWTDTDYFAAMADCDFLGQNLGFWLASSYPNAYKWETQLWRTVGINLNGNIIYPGQLIMQTFNGS</sequence>
<comment type="subcellular location">
    <subcellularLocation>
        <location evidence="2">Cell membrane</location>
        <topology evidence="2">Lipid-anchor</topology>
        <topology evidence="2">GPI-anchor</topology>
    </subcellularLocation>
</comment>
<keyword id="KW-1003">Cell membrane</keyword>
<keyword id="KW-0325">Glycoprotein</keyword>
<keyword id="KW-0336">GPI-anchor</keyword>
<keyword id="KW-0449">Lipoprotein</keyword>
<keyword id="KW-0472">Membrane</keyword>
<keyword id="KW-1185">Reference proteome</keyword>
<keyword id="KW-0732">Signal</keyword>
<accession>Q9HGP7</accession>
<dbReference type="EMBL" id="CU329670">
    <property type="protein sequence ID" value="CAC05742.1"/>
    <property type="molecule type" value="Genomic_DNA"/>
</dbReference>
<dbReference type="RefSeq" id="NP_595039.1">
    <property type="nucleotide sequence ID" value="NM_001018169.2"/>
</dbReference>
<dbReference type="BioGRID" id="278492">
    <property type="interactions" value="3"/>
</dbReference>
<dbReference type="STRING" id="284812.Q9HGP7"/>
<dbReference type="PaxDb" id="4896-SPAC212.08c.1"/>
<dbReference type="EnsemblFungi" id="SPAC212.08c.1">
    <property type="protein sequence ID" value="SPAC212.08c.1:pep"/>
    <property type="gene ID" value="SPAC212.08c"/>
</dbReference>
<dbReference type="KEGG" id="spo:2542009"/>
<dbReference type="PomBase" id="SPAC212.08c"/>
<dbReference type="VEuPathDB" id="FungiDB:SPAC212.08c"/>
<dbReference type="HOGENOM" id="CLU_1001703_0_0_1"/>
<dbReference type="InParanoid" id="Q9HGP7"/>
<dbReference type="PRO" id="PR:Q9HGP7"/>
<dbReference type="Proteomes" id="UP000002485">
    <property type="component" value="Chromosome I"/>
</dbReference>
<dbReference type="GO" id="GO:0005783">
    <property type="term" value="C:endoplasmic reticulum"/>
    <property type="evidence" value="ECO:0007005"/>
    <property type="project" value="PomBase"/>
</dbReference>
<dbReference type="GO" id="GO:0009897">
    <property type="term" value="C:external side of plasma membrane"/>
    <property type="evidence" value="ECO:0000304"/>
    <property type="project" value="PomBase"/>
</dbReference>
<reference key="1">
    <citation type="journal article" date="2002" name="Nature">
        <title>The genome sequence of Schizosaccharomyces pombe.</title>
        <authorList>
            <person name="Wood V."/>
            <person name="Gwilliam R."/>
            <person name="Rajandream M.A."/>
            <person name="Lyne M.H."/>
            <person name="Lyne R."/>
            <person name="Stewart A."/>
            <person name="Sgouros J.G."/>
            <person name="Peat N."/>
            <person name="Hayles J."/>
            <person name="Baker S.G."/>
            <person name="Basham D."/>
            <person name="Bowman S."/>
            <person name="Brooks K."/>
            <person name="Brown D."/>
            <person name="Brown S."/>
            <person name="Chillingworth T."/>
            <person name="Churcher C.M."/>
            <person name="Collins M."/>
            <person name="Connor R."/>
            <person name="Cronin A."/>
            <person name="Davis P."/>
            <person name="Feltwell T."/>
            <person name="Fraser A."/>
            <person name="Gentles S."/>
            <person name="Goble A."/>
            <person name="Hamlin N."/>
            <person name="Harris D.E."/>
            <person name="Hidalgo J."/>
            <person name="Hodgson G."/>
            <person name="Holroyd S."/>
            <person name="Hornsby T."/>
            <person name="Howarth S."/>
            <person name="Huckle E.J."/>
            <person name="Hunt S."/>
            <person name="Jagels K."/>
            <person name="James K.D."/>
            <person name="Jones L."/>
            <person name="Jones M."/>
            <person name="Leather S."/>
            <person name="McDonald S."/>
            <person name="McLean J."/>
            <person name="Mooney P."/>
            <person name="Moule S."/>
            <person name="Mungall K.L."/>
            <person name="Murphy L.D."/>
            <person name="Niblett D."/>
            <person name="Odell C."/>
            <person name="Oliver K."/>
            <person name="O'Neil S."/>
            <person name="Pearson D."/>
            <person name="Quail M.A."/>
            <person name="Rabbinowitsch E."/>
            <person name="Rutherford K.M."/>
            <person name="Rutter S."/>
            <person name="Saunders D."/>
            <person name="Seeger K."/>
            <person name="Sharp S."/>
            <person name="Skelton J."/>
            <person name="Simmonds M.N."/>
            <person name="Squares R."/>
            <person name="Squares S."/>
            <person name="Stevens K."/>
            <person name="Taylor K."/>
            <person name="Taylor R.G."/>
            <person name="Tivey A."/>
            <person name="Walsh S.V."/>
            <person name="Warren T."/>
            <person name="Whitehead S."/>
            <person name="Woodward J.R."/>
            <person name="Volckaert G."/>
            <person name="Aert R."/>
            <person name="Robben J."/>
            <person name="Grymonprez B."/>
            <person name="Weltjens I."/>
            <person name="Vanstreels E."/>
            <person name="Rieger M."/>
            <person name="Schaefer M."/>
            <person name="Mueller-Auer S."/>
            <person name="Gabel C."/>
            <person name="Fuchs M."/>
            <person name="Duesterhoeft A."/>
            <person name="Fritzc C."/>
            <person name="Holzer E."/>
            <person name="Moestl D."/>
            <person name="Hilbert H."/>
            <person name="Borzym K."/>
            <person name="Langer I."/>
            <person name="Beck A."/>
            <person name="Lehrach H."/>
            <person name="Reinhardt R."/>
            <person name="Pohl T.M."/>
            <person name="Eger P."/>
            <person name="Zimmermann W."/>
            <person name="Wedler H."/>
            <person name="Wambutt R."/>
            <person name="Purnelle B."/>
            <person name="Goffeau A."/>
            <person name="Cadieu E."/>
            <person name="Dreano S."/>
            <person name="Gloux S."/>
            <person name="Lelaure V."/>
            <person name="Mottier S."/>
            <person name="Galibert F."/>
            <person name="Aves S.J."/>
            <person name="Xiang Z."/>
            <person name="Hunt C."/>
            <person name="Moore K."/>
            <person name="Hurst S.M."/>
            <person name="Lucas M."/>
            <person name="Rochet M."/>
            <person name="Gaillardin C."/>
            <person name="Tallada V.A."/>
            <person name="Garzon A."/>
            <person name="Thode G."/>
            <person name="Daga R.R."/>
            <person name="Cruzado L."/>
            <person name="Jimenez J."/>
            <person name="Sanchez M."/>
            <person name="del Rey F."/>
            <person name="Benito J."/>
            <person name="Dominguez A."/>
            <person name="Revuelta J.L."/>
            <person name="Moreno S."/>
            <person name="Armstrong J."/>
            <person name="Forsburg S.L."/>
            <person name="Cerutti L."/>
            <person name="Lowe T."/>
            <person name="McCombie W.R."/>
            <person name="Paulsen I."/>
            <person name="Potashkin J."/>
            <person name="Shpakovski G.V."/>
            <person name="Ussery D."/>
            <person name="Barrell B.G."/>
            <person name="Nurse P."/>
        </authorList>
    </citation>
    <scope>NUCLEOTIDE SEQUENCE [LARGE SCALE GENOMIC DNA]</scope>
    <source>
        <strain>972 / ATCC 24843</strain>
    </source>
</reference>